<protein>
    <recommendedName>
        <fullName>C2 calcium-dependent domain-containing protein 4D</fullName>
    </recommendedName>
</protein>
<reference key="1">
    <citation type="journal article" date="2009" name="PLoS Biol.">
        <title>Lineage-specific biology revealed by a finished genome assembly of the mouse.</title>
        <authorList>
            <person name="Church D.M."/>
            <person name="Goodstadt L."/>
            <person name="Hillier L.W."/>
            <person name="Zody M.C."/>
            <person name="Goldstein S."/>
            <person name="She X."/>
            <person name="Bult C.J."/>
            <person name="Agarwala R."/>
            <person name="Cherry J.L."/>
            <person name="DiCuccio M."/>
            <person name="Hlavina W."/>
            <person name="Kapustin Y."/>
            <person name="Meric P."/>
            <person name="Maglott D."/>
            <person name="Birtle Z."/>
            <person name="Marques A.C."/>
            <person name="Graves T."/>
            <person name="Zhou S."/>
            <person name="Teague B."/>
            <person name="Potamousis K."/>
            <person name="Churas C."/>
            <person name="Place M."/>
            <person name="Herschleb J."/>
            <person name="Runnheim R."/>
            <person name="Forrest D."/>
            <person name="Amos-Landgraf J."/>
            <person name="Schwartz D.C."/>
            <person name="Cheng Z."/>
            <person name="Lindblad-Toh K."/>
            <person name="Eichler E.E."/>
            <person name="Ponting C.P."/>
        </authorList>
    </citation>
    <scope>NUCLEOTIDE SEQUENCE [LARGE SCALE GENOMIC DNA]</scope>
    <source>
        <strain>C57BL/6J</strain>
    </source>
</reference>
<accession>P0CG09</accession>
<feature type="chain" id="PRO_0000394961" description="C2 calcium-dependent domain-containing protein 4D">
    <location>
        <begin position="1"/>
        <end position="341"/>
    </location>
</feature>
<feature type="domain" description="C2" evidence="1">
    <location>
        <begin position="205"/>
        <end position="331"/>
    </location>
</feature>
<feature type="region of interest" description="Disordered" evidence="2">
    <location>
        <begin position="56"/>
        <end position="75"/>
    </location>
</feature>
<feature type="region of interest" description="Disordered" evidence="2">
    <location>
        <begin position="134"/>
        <end position="176"/>
    </location>
</feature>
<feature type="compositionally biased region" description="Basic and acidic residues" evidence="2">
    <location>
        <begin position="56"/>
        <end position="71"/>
    </location>
</feature>
<feature type="compositionally biased region" description="Low complexity" evidence="2">
    <location>
        <begin position="139"/>
        <end position="149"/>
    </location>
</feature>
<evidence type="ECO:0000255" key="1">
    <source>
        <dbReference type="PROSITE-ProRule" id="PRU00041"/>
    </source>
</evidence>
<evidence type="ECO:0000256" key="2">
    <source>
        <dbReference type="SAM" id="MobiDB-lite"/>
    </source>
</evidence>
<name>C2C4D_MOUSE</name>
<proteinExistence type="predicted"/>
<sequence length="341" mass="36865">MWLLEKAGYRVRTAEARALQAHPSLVPKRQARGSPSRCNPNVLTPDRIPQFFIPPRLRDPRGAEGRVDRNPGGRNLPVACSLPHLAGREGWAFLPESPHTRRRESLFHGPRGLAAGLAPAQSRLHVSAPDLRLCRAPDSDTASSPDSSPCGSPHTPRPQSLSPDEASSADTSPYAPRRAPPLFHLDFLCCQLRPTKDSVLRLGPRGGQLRLSTEYQAGPGRLRLRLVSAEGLPRPRTRPGSGGGGCCVILRLQPRVRPGAQRSRVVQSSCNPIFNEDFFFEGLRPPDLAVRSLRAKVLDRGAGLRRDVLLGECETPLIALLPPLAGGLGPGSSLAPTHLSL</sequence>
<organism>
    <name type="scientific">Mus musculus</name>
    <name type="common">Mouse</name>
    <dbReference type="NCBI Taxonomy" id="10090"/>
    <lineage>
        <taxon>Eukaryota</taxon>
        <taxon>Metazoa</taxon>
        <taxon>Chordata</taxon>
        <taxon>Craniata</taxon>
        <taxon>Vertebrata</taxon>
        <taxon>Euteleostomi</taxon>
        <taxon>Mammalia</taxon>
        <taxon>Eutheria</taxon>
        <taxon>Euarchontoglires</taxon>
        <taxon>Glires</taxon>
        <taxon>Rodentia</taxon>
        <taxon>Myomorpha</taxon>
        <taxon>Muroidea</taxon>
        <taxon>Muridae</taxon>
        <taxon>Murinae</taxon>
        <taxon>Mus</taxon>
        <taxon>Mus</taxon>
    </lineage>
</organism>
<gene>
    <name type="primary">C2cd4d</name>
    <name type="synonym">Gm659</name>
</gene>
<keyword id="KW-1185">Reference proteome</keyword>
<dbReference type="EMBL" id="AC164562">
    <property type="status" value="NOT_ANNOTATED_CDS"/>
    <property type="molecule type" value="Genomic_DNA"/>
</dbReference>
<dbReference type="CCDS" id="CCDS50983.1"/>
<dbReference type="RefSeq" id="NP_001129589.1">
    <property type="nucleotide sequence ID" value="NM_001136117.2"/>
</dbReference>
<dbReference type="SMR" id="P0CG09"/>
<dbReference type="FunCoup" id="P0CG09">
    <property type="interactions" value="2"/>
</dbReference>
<dbReference type="STRING" id="10090.ENSMUSP00000128182"/>
<dbReference type="iPTMnet" id="P0CG09"/>
<dbReference type="PhosphoSitePlus" id="P0CG09"/>
<dbReference type="PaxDb" id="10090-ENSMUSP00000128182"/>
<dbReference type="ProteomicsDB" id="281711"/>
<dbReference type="Antibodypedia" id="76708">
    <property type="antibodies" value="2 antibodies from 2 providers"/>
</dbReference>
<dbReference type="Ensembl" id="ENSMUST00000169433.3">
    <property type="protein sequence ID" value="ENSMUSP00000128182.2"/>
    <property type="gene ID" value="ENSMUSG00000091648.3"/>
</dbReference>
<dbReference type="GeneID" id="271944"/>
<dbReference type="KEGG" id="mmu:271944"/>
<dbReference type="UCSC" id="uc012ctl.1">
    <property type="organism name" value="mouse"/>
</dbReference>
<dbReference type="AGR" id="MGI:2685505"/>
<dbReference type="CTD" id="100191040"/>
<dbReference type="MGI" id="MGI:2685505">
    <property type="gene designation" value="C2cd4d"/>
</dbReference>
<dbReference type="VEuPathDB" id="HostDB:ENSMUSG00000091648"/>
<dbReference type="eggNOG" id="KOG4216">
    <property type="taxonomic scope" value="Eukaryota"/>
</dbReference>
<dbReference type="GeneTree" id="ENSGT00940000163537"/>
<dbReference type="HOGENOM" id="CLU_051964_0_0_1"/>
<dbReference type="InParanoid" id="P0CG09"/>
<dbReference type="OMA" id="PHCDPRH"/>
<dbReference type="OrthoDB" id="9947256at2759"/>
<dbReference type="PhylomeDB" id="P0CG09"/>
<dbReference type="TreeFam" id="TF330989"/>
<dbReference type="BioGRID-ORCS" id="271944">
    <property type="hits" value="6 hits in 79 CRISPR screens"/>
</dbReference>
<dbReference type="PRO" id="PR:P0CG09"/>
<dbReference type="Proteomes" id="UP000000589">
    <property type="component" value="Chromosome 3"/>
</dbReference>
<dbReference type="RNAct" id="P0CG09">
    <property type="molecule type" value="protein"/>
</dbReference>
<dbReference type="Bgee" id="ENSMUSG00000091648">
    <property type="expression patterns" value="Expressed in thymus and 48 other cell types or tissues"/>
</dbReference>
<dbReference type="CDD" id="cd00030">
    <property type="entry name" value="C2"/>
    <property type="match status" value="1"/>
</dbReference>
<dbReference type="Gene3D" id="2.60.40.150">
    <property type="entry name" value="C2 domain"/>
    <property type="match status" value="1"/>
</dbReference>
<dbReference type="InterPro" id="IPR000008">
    <property type="entry name" value="C2_dom"/>
</dbReference>
<dbReference type="InterPro" id="IPR035892">
    <property type="entry name" value="C2_domain_sf"/>
</dbReference>
<dbReference type="InterPro" id="IPR043549">
    <property type="entry name" value="C2C4C/C2C4D"/>
</dbReference>
<dbReference type="PANTHER" id="PTHR46291:SF1">
    <property type="entry name" value="C2 CALCIUM-DEPENDENT DOMAIN-CONTAINING PROTEIN 4D"/>
    <property type="match status" value="1"/>
</dbReference>
<dbReference type="PANTHER" id="PTHR46291">
    <property type="entry name" value="C2 DOMAIN-CONTAINING PROTEIN"/>
    <property type="match status" value="1"/>
</dbReference>
<dbReference type="Pfam" id="PF00168">
    <property type="entry name" value="C2"/>
    <property type="match status" value="1"/>
</dbReference>
<dbReference type="SMART" id="SM00239">
    <property type="entry name" value="C2"/>
    <property type="match status" value="1"/>
</dbReference>
<dbReference type="SUPFAM" id="SSF49562">
    <property type="entry name" value="C2 domain (Calcium/lipid-binding domain, CaLB)"/>
    <property type="match status" value="1"/>
</dbReference>
<dbReference type="PROSITE" id="PS50004">
    <property type="entry name" value="C2"/>
    <property type="match status" value="1"/>
</dbReference>